<dbReference type="EC" id="5.3.1.7" evidence="2"/>
<dbReference type="EMBL" id="AB761401">
    <property type="protein sequence ID" value="BAP46301.1"/>
    <property type="molecule type" value="Genomic_DNA"/>
</dbReference>
<dbReference type="RefSeq" id="WP_107491567.1">
    <property type="nucleotide sequence ID" value="NZ_CADBTT010000053.1"/>
</dbReference>
<dbReference type="SMR" id="A0A077LPS9"/>
<dbReference type="GO" id="GO:0016853">
    <property type="term" value="F:isomerase activity"/>
    <property type="evidence" value="ECO:0007669"/>
    <property type="project" value="UniProtKB-KW"/>
</dbReference>
<dbReference type="GO" id="GO:0005975">
    <property type="term" value="P:carbohydrate metabolic process"/>
    <property type="evidence" value="ECO:0007669"/>
    <property type="project" value="InterPro"/>
</dbReference>
<dbReference type="Gene3D" id="1.50.10.10">
    <property type="match status" value="1"/>
</dbReference>
<dbReference type="InterPro" id="IPR008928">
    <property type="entry name" value="6-hairpin_glycosidase_sf"/>
</dbReference>
<dbReference type="InterPro" id="IPR012341">
    <property type="entry name" value="6hp_glycosidase-like_sf"/>
</dbReference>
<dbReference type="InterPro" id="IPR010819">
    <property type="entry name" value="AGE/CE"/>
</dbReference>
<dbReference type="PANTHER" id="PTHR15108">
    <property type="entry name" value="N-ACYLGLUCOSAMINE-2-EPIMERASE"/>
    <property type="match status" value="1"/>
</dbReference>
<dbReference type="Pfam" id="PF07221">
    <property type="entry name" value="GlcNAc_2-epim"/>
    <property type="match status" value="1"/>
</dbReference>
<dbReference type="SUPFAM" id="SSF48208">
    <property type="entry name" value="Six-hairpin glycosidases"/>
    <property type="match status" value="1"/>
</dbReference>
<protein>
    <recommendedName>
        <fullName evidence="3">D-mannose isomerase</fullName>
        <ecNumber evidence="2">5.3.1.7</ecNumber>
    </recommendedName>
</protein>
<accession>A0A077LPS9</accession>
<feature type="chain" id="PRO_0000453303" description="D-mannose isomerase">
    <location>
        <begin position="1"/>
        <end position="407"/>
    </location>
</feature>
<feature type="active site" description="Proton donor/acceptor" evidence="1">
    <location>
        <position position="251"/>
    </location>
</feature>
<feature type="active site" description="Proton donor/acceptor" evidence="1">
    <location>
        <position position="383"/>
    </location>
</feature>
<gene>
    <name evidence="3" type="primary">manI</name>
</gene>
<comment type="function">
    <text evidence="2">Catalyzes the reversible isomerization of D-mannose to D-fructose. Shows weaker activity on D-lyxose, but cannot use N-acetyl D-glucosamine.</text>
</comment>
<comment type="catalytic activity">
    <reaction evidence="2">
        <text>D-mannose = D-fructose</text>
        <dbReference type="Rhea" id="RHEA:22604"/>
        <dbReference type="ChEBI" id="CHEBI:4208"/>
        <dbReference type="ChEBI" id="CHEBI:37721"/>
        <dbReference type="EC" id="5.3.1.7"/>
    </reaction>
</comment>
<comment type="catalytic activity">
    <reaction evidence="2">
        <text>D-lyxose = D-xylulose</text>
        <dbReference type="Rhea" id="RHEA:14201"/>
        <dbReference type="ChEBI" id="CHEBI:16789"/>
        <dbReference type="ChEBI" id="CHEBI:17140"/>
    </reaction>
</comment>
<comment type="activity regulation">
    <text evidence="2">Significantly inhibited by divalent metal ions such as Cu(2+), Cd(2+) or Ca(2+).</text>
</comment>
<comment type="biophysicochemical properties">
    <kinetics>
        <KM evidence="2">115 mM for D-mannose</KM>
        <KM evidence="2">537 mM for D-lyxose</KM>
        <text evidence="2">kcat is 788 sec(-1) with D-mannose as substrate. kcat is 63.3 sec(-1) with D-lyxose as substrate.</text>
    </kinetics>
    <phDependence>
        <text evidence="2">Optimum pH is around 8.0. Stable between pH 4 and 11.</text>
    </phDependence>
    <temperatureDependence>
        <text evidence="2">Optimum temperature is 60 degrees Celsius.</text>
    </temperatureDependence>
</comment>
<comment type="subunit">
    <text evidence="2">Homodimer.</text>
</comment>
<comment type="similarity">
    <text evidence="4">Belongs to the N-acylglucosamine 2-epimerase family.</text>
</comment>
<name>MANI_THEFU</name>
<proteinExistence type="evidence at protein level"/>
<organism>
    <name type="scientific">Thermobifida fusca</name>
    <name type="common">Thermomonospora fusca</name>
    <dbReference type="NCBI Taxonomy" id="2021"/>
    <lineage>
        <taxon>Bacteria</taxon>
        <taxon>Bacillati</taxon>
        <taxon>Actinomycetota</taxon>
        <taxon>Actinomycetes</taxon>
        <taxon>Streptosporangiales</taxon>
        <taxon>Nocardiopsidaceae</taxon>
        <taxon>Thermobifida</taxon>
    </lineage>
</organism>
<sequence>MTLWTARAAHRAWLDAEARRLVDFAAAADHPEHGFAWLDGSGAPLPEQGVHTWITCRVTHVAALAHLEGIPGASALADHGLRALAGPLRDPEHDGWFTALDSRGTVADSRKEAYQHAFVLLAAASATVAGRPGARELLDAAAAVIEQRFWEEETGRCRESWDAAWHADEPYRGANSNMHLVEAFLAAFDATGDRVWAERALRIAHFFVHEVAAPRDWRLPEHFTPDWQVVADYNTDDRAHPFRPYGVTVGHVLEWARLLVHVEAALPDPPSWLLADAEAMFAAAVARGWSVDGTEGFVYTLDYDDTPVVRSRMHWVVAEAISAAAVLGQRTGDERYEHWYRTWWDHAATYFVDTVQGSWHHELDPTLAPPPGGTWSGKPDVYHAYQATRLPLLPLAPSLAGALATVG</sequence>
<keyword id="KW-0413">Isomerase</keyword>
<evidence type="ECO:0000250" key="1">
    <source>
        <dbReference type="UniProtKB" id="Q8ZKT7"/>
    </source>
</evidence>
<evidence type="ECO:0000269" key="2">
    <source ref="1"/>
</evidence>
<evidence type="ECO:0000303" key="3">
    <source ref="1"/>
</evidence>
<evidence type="ECO:0000305" key="4"/>
<reference key="1">
    <citation type="journal article" date="2014" name="J. Appl. Glycosci.">
        <title>Characterization of mannose isomerase from a cellulolytic actinobacteria Thermobifida fusca MBL10003.</title>
        <authorList>
            <person name="Kasumi T."/>
            <person name="Mori S."/>
            <person name="Kaneko S."/>
            <person name="Matsumoto H."/>
            <person name="Kobayashi Y."/>
            <person name="Koyama Y."/>
        </authorList>
    </citation>
    <scope>NUCLEOTIDE SEQUENCE [GENOMIC DNA]</scope>
    <scope>FUNCTION</scope>
    <scope>CATALYTIC ACTIVITY</scope>
    <scope>ACTIVITY REGULATION</scope>
    <scope>BIOPHYSICOCHEMICAL PROPERTIES</scope>
    <scope>SUBUNIT</scope>
    <source>
        <strain>MBL10003</strain>
    </source>
</reference>